<organism>
    <name type="scientific">Bos taurus</name>
    <name type="common">Bovine</name>
    <dbReference type="NCBI Taxonomy" id="9913"/>
    <lineage>
        <taxon>Eukaryota</taxon>
        <taxon>Metazoa</taxon>
        <taxon>Chordata</taxon>
        <taxon>Craniata</taxon>
        <taxon>Vertebrata</taxon>
        <taxon>Euteleostomi</taxon>
        <taxon>Mammalia</taxon>
        <taxon>Eutheria</taxon>
        <taxon>Laurasiatheria</taxon>
        <taxon>Artiodactyla</taxon>
        <taxon>Ruminantia</taxon>
        <taxon>Pecora</taxon>
        <taxon>Bovidae</taxon>
        <taxon>Bovinae</taxon>
        <taxon>Bos</taxon>
    </lineage>
</organism>
<keyword id="KW-0007">Acetylation</keyword>
<keyword id="KW-0010">Activator</keyword>
<keyword id="KW-0143">Chaperone</keyword>
<keyword id="KW-0156">Chromatin regulator</keyword>
<keyword id="KW-0963">Cytoplasm</keyword>
<keyword id="KW-0539">Nucleus</keyword>
<keyword id="KW-0597">Phosphoprotein</keyword>
<keyword id="KW-1185">Reference proteome</keyword>
<keyword id="KW-0677">Repeat</keyword>
<keyword id="KW-0804">Transcription</keyword>
<keyword id="KW-0805">Transcription regulation</keyword>
<protein>
    <recommendedName>
        <fullName>DnaJ homolog subfamily C member 2</fullName>
    </recommendedName>
    <alternativeName>
        <fullName>Zuotin-related factor 1</fullName>
    </alternativeName>
</protein>
<gene>
    <name type="primary">DNAJC2</name>
    <name type="synonym">ZRF1</name>
</gene>
<accession>Q1RMH9</accession>
<comment type="function">
    <text evidence="2">Acts both as a chaperone in the cytosol and as a chromatin regulator in the nucleus. When cytosolic, acts as a molecular chaperone: component of the ribosome-associated complex (RAC), a complex involved in folding or maintaining nascent polypeptides in a folding-competent state. In the RAC complex, stimulates the ATPase activity of the ribosome-associated pool of Hsp70-type chaperones HSPA14 that bind to the nascent polypeptide chain. When nuclear, mediates the switching from polycomb-repressed genes to an active state: specifically recruited at histone H2A ubiquitinated at 'Lys-119' (H2AK119ub), and promotes the displacement of the polycomb PRC1 complex from chromatin, thereby facilitating transcription activation.</text>
</comment>
<comment type="subunit">
    <text evidence="1 2">Component of ribosome-associated complex (RAC), a heterodimer composed of Hsp70/DnaK-type chaperone HSPA14 and Hsp40/DnaJ-type chaperone DNAJC2 (By similarity). Interacts (via ZRF1-UBD region) with ID1 (By similarity).</text>
</comment>
<comment type="subcellular location">
    <subcellularLocation>
        <location evidence="2">Nucleus</location>
    </subcellularLocation>
    <subcellularLocation>
        <location evidence="2">Cytoplasm</location>
        <location evidence="2">Cytosol</location>
    </subcellularLocation>
</comment>
<comment type="domain">
    <text evidence="2">The ZRF1-UBD region specifically recognizes and binds H2AK119ub. The ZRF1-UBD region is also involved in protein-protein interactions with other proteins, suggesting that it may be masked by some regulator, thereby preventing its association with H2AK119ub.</text>
</comment>
<comment type="PTM">
    <text evidence="2">Phosphorylated in M (mitotic) phase.</text>
</comment>
<sequence length="621" mass="71786">MLLLPSAADGQGTAITHALTSASTLCQVEPVGRWFEAFVKRRNRNASASFQELEDKKELSEESEDEELQLEEFPMLKTLDPKDWKNQDHYAVLGLGHVRYKATQRQIKAAHKAMVLKHHPDKRKAAGEPIKEGDNDYFTCITKAYEMLSDPVKRRAFNSVDPTFDNSVPSKSEAKDNFFEVFSPVFERNSRWSNKKNVPKLGDMNSSFEDVDAFYSFWYNFDSWREFSYLDEEEKEKAECRDERRWIEKQNRATRAQRKKEEMNRIRTLVDNAYSCDPRIKKFKEEEKAKKEAEKKAKADAKRKEQEAKEKQRQAELEAARLAKEKEEEEVRQQALLAKKEKDIQKKAIKKERQKLRNLCKTWNHFSDSEAERVKMMEEVEKLCDRLELSSLQCLNETLTSSTKEVGKAALEKQIEEINEQIRKEKEEAEARMRQASKNAEKSAGGGGNGSKHWSEDDLQLLIKAVNLFPAGTNSRWEVIANYMNIHSSSGVKRTAKDVIGKAKSLQKLDPHQKDDINKKAFDKFKKEHGVVPQADNATPSERFEGPCTDFTPWTTEEQKLLEQALKTYPVNTPERWEKIAEAVPGRTKKDCMKRYKELVEMVKAKKAAQEQVLNASRGKK</sequence>
<reference key="1">
    <citation type="submission" date="2006-04" db="EMBL/GenBank/DDBJ databases">
        <authorList>
            <consortium name="NIH - Mammalian Gene Collection (MGC) project"/>
        </authorList>
    </citation>
    <scope>NUCLEOTIDE SEQUENCE [LARGE SCALE MRNA]</scope>
    <source>
        <strain>Hereford</strain>
        <tissue>Ascending colon</tissue>
    </source>
</reference>
<evidence type="ECO:0000250" key="1">
    <source>
        <dbReference type="UniProtKB" id="P54103"/>
    </source>
</evidence>
<evidence type="ECO:0000250" key="2">
    <source>
        <dbReference type="UniProtKB" id="Q99543"/>
    </source>
</evidence>
<evidence type="ECO:0000255" key="3">
    <source>
        <dbReference type="PROSITE-ProRule" id="PRU00286"/>
    </source>
</evidence>
<evidence type="ECO:0000255" key="4">
    <source>
        <dbReference type="PROSITE-ProRule" id="PRU00624"/>
    </source>
</evidence>
<evidence type="ECO:0000256" key="5">
    <source>
        <dbReference type="SAM" id="MobiDB-lite"/>
    </source>
</evidence>
<dbReference type="EMBL" id="BC114887">
    <property type="protein sequence ID" value="AAI14888.1"/>
    <property type="molecule type" value="mRNA"/>
</dbReference>
<dbReference type="RefSeq" id="NP_001068805.1">
    <property type="nucleotide sequence ID" value="NM_001075337.1"/>
</dbReference>
<dbReference type="RefSeq" id="XP_005205394.1">
    <property type="nucleotide sequence ID" value="XM_005205337.3"/>
</dbReference>
<dbReference type="BMRB" id="Q1RMH9"/>
<dbReference type="SMR" id="Q1RMH9"/>
<dbReference type="FunCoup" id="Q1RMH9">
    <property type="interactions" value="4075"/>
</dbReference>
<dbReference type="STRING" id="9913.ENSBTAP00000004925"/>
<dbReference type="PaxDb" id="9913-ENSBTAP00000004925"/>
<dbReference type="GeneID" id="507897"/>
<dbReference type="KEGG" id="bta:507897"/>
<dbReference type="CTD" id="27000"/>
<dbReference type="VEuPathDB" id="HostDB:ENSBTAG00000003784"/>
<dbReference type="eggNOG" id="KOG0724">
    <property type="taxonomic scope" value="Eukaryota"/>
</dbReference>
<dbReference type="HOGENOM" id="CLU_019916_0_0_1"/>
<dbReference type="InParanoid" id="Q1RMH9"/>
<dbReference type="OMA" id="SFWYDFD"/>
<dbReference type="OrthoDB" id="1690618at2759"/>
<dbReference type="TreeFam" id="TF105834"/>
<dbReference type="Reactome" id="R-BTA-3371453">
    <property type="pathway name" value="Regulation of HSF1-mediated heat shock response"/>
</dbReference>
<dbReference type="Proteomes" id="UP000009136">
    <property type="component" value="Chromosome 4"/>
</dbReference>
<dbReference type="Bgee" id="ENSBTAG00000003784">
    <property type="expression patterns" value="Expressed in semen and 108 other cell types or tissues"/>
</dbReference>
<dbReference type="GO" id="GO:0005829">
    <property type="term" value="C:cytosol"/>
    <property type="evidence" value="ECO:0000250"/>
    <property type="project" value="UniProtKB"/>
</dbReference>
<dbReference type="GO" id="GO:0005634">
    <property type="term" value="C:nucleus"/>
    <property type="evidence" value="ECO:0000250"/>
    <property type="project" value="UniProtKB"/>
</dbReference>
<dbReference type="GO" id="GO:0003682">
    <property type="term" value="F:chromatin binding"/>
    <property type="evidence" value="ECO:0000250"/>
    <property type="project" value="UniProtKB"/>
</dbReference>
<dbReference type="GO" id="GO:0042393">
    <property type="term" value="F:histone binding"/>
    <property type="evidence" value="ECO:0000250"/>
    <property type="project" value="UniProtKB"/>
</dbReference>
<dbReference type="GO" id="GO:0030544">
    <property type="term" value="F:Hsp70 protein binding"/>
    <property type="evidence" value="ECO:0000318"/>
    <property type="project" value="GO_Central"/>
</dbReference>
<dbReference type="GO" id="GO:0043022">
    <property type="term" value="F:ribosome binding"/>
    <property type="evidence" value="ECO:0000318"/>
    <property type="project" value="GO_Central"/>
</dbReference>
<dbReference type="GO" id="GO:0061649">
    <property type="term" value="F:ubiquitin-modified histone reader activity"/>
    <property type="evidence" value="ECO:0000250"/>
    <property type="project" value="UniProtKB"/>
</dbReference>
<dbReference type="GO" id="GO:0051083">
    <property type="term" value="P:'de novo' cotranslational protein folding"/>
    <property type="evidence" value="ECO:0000318"/>
    <property type="project" value="GO_Central"/>
</dbReference>
<dbReference type="GO" id="GO:0045893">
    <property type="term" value="P:positive regulation of DNA-templated transcription"/>
    <property type="evidence" value="ECO:0000250"/>
    <property type="project" value="UniProtKB"/>
</dbReference>
<dbReference type="GO" id="GO:0006450">
    <property type="term" value="P:regulation of translational fidelity"/>
    <property type="evidence" value="ECO:0007669"/>
    <property type="project" value="InterPro"/>
</dbReference>
<dbReference type="CDD" id="cd06257">
    <property type="entry name" value="DnaJ"/>
    <property type="match status" value="1"/>
</dbReference>
<dbReference type="CDD" id="cd00167">
    <property type="entry name" value="SANT"/>
    <property type="match status" value="2"/>
</dbReference>
<dbReference type="FunFam" id="1.10.10.60:FF:000180">
    <property type="entry name" value="DnaJ (Hsp40) homolog, subfamily C, member 2"/>
    <property type="match status" value="1"/>
</dbReference>
<dbReference type="FunFam" id="1.10.287.110:FF:000024">
    <property type="entry name" value="DnaJ (Hsp40) homolog, subfamily C, member 2"/>
    <property type="match status" value="1"/>
</dbReference>
<dbReference type="FunFam" id="1.10.10.60:FF:000215">
    <property type="entry name" value="dnaJ homolog subfamily C member 2 isoform X1"/>
    <property type="match status" value="1"/>
</dbReference>
<dbReference type="FunFam" id="1.10.8.840:FF:000001">
    <property type="entry name" value="dnaJ homolog subfamily C member 2 isoform X1"/>
    <property type="match status" value="1"/>
</dbReference>
<dbReference type="Gene3D" id="1.10.287.110">
    <property type="entry name" value="DnaJ domain"/>
    <property type="match status" value="1"/>
</dbReference>
<dbReference type="Gene3D" id="1.10.10.60">
    <property type="entry name" value="Homeodomain-like"/>
    <property type="match status" value="2"/>
</dbReference>
<dbReference type="Gene3D" id="1.10.8.840">
    <property type="entry name" value="Ribosome-associated complex head domain"/>
    <property type="match status" value="1"/>
</dbReference>
<dbReference type="InterPro" id="IPR001623">
    <property type="entry name" value="DnaJ_domain"/>
</dbReference>
<dbReference type="InterPro" id="IPR018253">
    <property type="entry name" value="DnaJ_domain_CS"/>
</dbReference>
<dbReference type="InterPro" id="IPR009057">
    <property type="entry name" value="Homeodomain-like_sf"/>
</dbReference>
<dbReference type="InterPro" id="IPR036869">
    <property type="entry name" value="J_dom_sf"/>
</dbReference>
<dbReference type="InterPro" id="IPR017930">
    <property type="entry name" value="Myb_dom"/>
</dbReference>
<dbReference type="InterPro" id="IPR032003">
    <property type="entry name" value="RAC_head"/>
</dbReference>
<dbReference type="InterPro" id="IPR042569">
    <property type="entry name" value="RAC_head_sf"/>
</dbReference>
<dbReference type="InterPro" id="IPR001005">
    <property type="entry name" value="SANT/Myb"/>
</dbReference>
<dbReference type="InterPro" id="IPR017884">
    <property type="entry name" value="SANT_dom"/>
</dbReference>
<dbReference type="InterPro" id="IPR054076">
    <property type="entry name" value="ZUO1-like_ZHD"/>
</dbReference>
<dbReference type="InterPro" id="IPR044634">
    <property type="entry name" value="Zuotin/DnaJC2"/>
</dbReference>
<dbReference type="PANTHER" id="PTHR43999">
    <property type="entry name" value="DNAJ HOMOLOG SUBFAMILY C MEMBER 2"/>
    <property type="match status" value="1"/>
</dbReference>
<dbReference type="PANTHER" id="PTHR43999:SF1">
    <property type="entry name" value="DNAJ HOMOLOG SUBFAMILY C MEMBER 2"/>
    <property type="match status" value="1"/>
</dbReference>
<dbReference type="Pfam" id="PF00226">
    <property type="entry name" value="DnaJ"/>
    <property type="match status" value="1"/>
</dbReference>
<dbReference type="Pfam" id="PF00249">
    <property type="entry name" value="Myb_DNA-binding"/>
    <property type="match status" value="1"/>
</dbReference>
<dbReference type="Pfam" id="PF16717">
    <property type="entry name" value="RAC_head"/>
    <property type="match status" value="1"/>
</dbReference>
<dbReference type="Pfam" id="PF21884">
    <property type="entry name" value="ZUO1-like_ZHD"/>
    <property type="match status" value="1"/>
</dbReference>
<dbReference type="SMART" id="SM00271">
    <property type="entry name" value="DnaJ"/>
    <property type="match status" value="1"/>
</dbReference>
<dbReference type="SMART" id="SM00717">
    <property type="entry name" value="SANT"/>
    <property type="match status" value="2"/>
</dbReference>
<dbReference type="SUPFAM" id="SSF46565">
    <property type="entry name" value="Chaperone J-domain"/>
    <property type="match status" value="1"/>
</dbReference>
<dbReference type="SUPFAM" id="SSF46689">
    <property type="entry name" value="Homeodomain-like"/>
    <property type="match status" value="2"/>
</dbReference>
<dbReference type="PROSITE" id="PS00636">
    <property type="entry name" value="DNAJ_1"/>
    <property type="match status" value="1"/>
</dbReference>
<dbReference type="PROSITE" id="PS50076">
    <property type="entry name" value="DNAJ_2"/>
    <property type="match status" value="1"/>
</dbReference>
<dbReference type="PROSITE" id="PS51293">
    <property type="entry name" value="SANT"/>
    <property type="match status" value="1"/>
</dbReference>
<proteinExistence type="evidence at transcript level"/>
<feature type="chain" id="PRO_0000280177" description="DnaJ homolog subfamily C member 2">
    <location>
        <begin position="1"/>
        <end position="621"/>
    </location>
</feature>
<feature type="domain" description="J" evidence="3">
    <location>
        <begin position="88"/>
        <end position="161"/>
    </location>
</feature>
<feature type="domain" description="SANT 1" evidence="4">
    <location>
        <begin position="449"/>
        <end position="511"/>
    </location>
</feature>
<feature type="domain" description="SANT 2" evidence="4">
    <location>
        <begin position="549"/>
        <end position="604"/>
    </location>
</feature>
<feature type="region of interest" description="ZRF1-UBD">
    <location>
        <begin position="160"/>
        <end position="250"/>
    </location>
</feature>
<feature type="region of interest" description="Disordered" evidence="5">
    <location>
        <begin position="294"/>
        <end position="315"/>
    </location>
</feature>
<feature type="region of interest" description="Disordered" evidence="5">
    <location>
        <begin position="426"/>
        <end position="453"/>
    </location>
</feature>
<feature type="modified residue" description="N-acetylmethionine" evidence="2">
    <location>
        <position position="1"/>
    </location>
</feature>
<feature type="modified residue" description="Phosphoserine" evidence="2">
    <location>
        <position position="47"/>
    </location>
</feature>
<feature type="modified residue" description="Phosphoserine" evidence="2">
    <location>
        <position position="49"/>
    </location>
</feature>
<feature type="modified residue" description="Phosphoserine" evidence="2">
    <location>
        <position position="60"/>
    </location>
</feature>
<feature type="modified residue" description="Phosphoserine" evidence="2">
    <location>
        <position position="63"/>
    </location>
</feature>
<feature type="modified residue" description="Phosphoserine" evidence="1">
    <location>
        <position position="183"/>
    </location>
</feature>
<name>DNJC2_BOVIN</name>